<evidence type="ECO:0000250" key="1">
    <source>
        <dbReference type="UniProtKB" id="A0A059WI14"/>
    </source>
</evidence>
<evidence type="ECO:0000255" key="2">
    <source>
        <dbReference type="PROSITE-ProRule" id="PRU01163"/>
    </source>
</evidence>
<evidence type="ECO:0000269" key="3">
    <source>
    </source>
</evidence>
<evidence type="ECO:0000269" key="4">
    <source>
    </source>
</evidence>
<evidence type="ECO:0000269" key="5">
    <source>
    </source>
</evidence>
<evidence type="ECO:0000303" key="6">
    <source>
    </source>
</evidence>
<evidence type="ECO:0000303" key="7">
    <source>
    </source>
</evidence>
<evidence type="ECO:0000303" key="8">
    <source>
    </source>
</evidence>
<evidence type="ECO:0000305" key="9"/>
<evidence type="ECO:0000305" key="10">
    <source>
    </source>
</evidence>
<evidence type="ECO:0000305" key="11">
    <source>
    </source>
</evidence>
<evidence type="ECO:0000312" key="12">
    <source>
        <dbReference type="EMBL" id="ACY99683.1"/>
    </source>
</evidence>
<evidence type="ECO:0007744" key="13">
    <source>
        <dbReference type="PDB" id="5C4P"/>
    </source>
</evidence>
<evidence type="ECO:0007744" key="14">
    <source>
        <dbReference type="PDB" id="5C68"/>
    </source>
</evidence>
<evidence type="ECO:0007744" key="15">
    <source>
        <dbReference type="PDB" id="5C6X"/>
    </source>
</evidence>
<evidence type="ECO:0007744" key="16">
    <source>
        <dbReference type="PDB" id="5CB9"/>
    </source>
</evidence>
<evidence type="ECO:0007744" key="17">
    <source>
        <dbReference type="PDB" id="5D4F"/>
    </source>
</evidence>
<evidence type="ECO:0007744" key="18">
    <source>
        <dbReference type="PDB" id="5DFG"/>
    </source>
</evidence>
<evidence type="ECO:0007744" key="19">
    <source>
        <dbReference type="PDB" id="5DRH"/>
    </source>
</evidence>
<evidence type="ECO:0007744" key="20">
    <source>
        <dbReference type="PDB" id="5HCW"/>
    </source>
</evidence>
<evidence type="ECO:0007744" key="21">
    <source>
        <dbReference type="PDB" id="5V0F"/>
    </source>
</evidence>
<evidence type="ECO:0007744" key="22">
    <source>
        <dbReference type="PDB" id="6XA0"/>
    </source>
</evidence>
<evidence type="ECO:0007744" key="23">
    <source>
        <dbReference type="PDB" id="6XCK"/>
    </source>
</evidence>
<name>ARSI_THECD</name>
<organism>
    <name type="scientific">Thermomonospora curvata (strain ATCC 19995 / DSM 43183 / JCM 3096 / KCTC 9072 / NBRC 15933 / NCIMB 10081 / Henssen B9)</name>
    <dbReference type="NCBI Taxonomy" id="471852"/>
    <lineage>
        <taxon>Bacteria</taxon>
        <taxon>Bacillati</taxon>
        <taxon>Actinomycetota</taxon>
        <taxon>Actinomycetes</taxon>
        <taxon>Streptosporangiales</taxon>
        <taxon>Thermomonosporaceae</taxon>
        <taxon>Thermomonospora</taxon>
    </lineage>
</organism>
<protein>
    <recommendedName>
        <fullName evidence="9">Trivalent organoarsenical cleaving enzyme</fullName>
        <ecNumber evidence="4 5">1.13.11.-</ecNumber>
    </recommendedName>
    <alternativeName>
        <fullName evidence="6 7 8">C-As lyase</fullName>
    </alternativeName>
    <alternativeName>
        <fullName evidence="10">Methylarsonous acid demethylase</fullName>
        <shortName evidence="10">MAs(III) demethylase</shortName>
    </alternativeName>
</protein>
<dbReference type="EC" id="1.13.11.-" evidence="4 5"/>
<dbReference type="EMBL" id="CP001738">
    <property type="protein sequence ID" value="ACY99683.1"/>
    <property type="molecule type" value="Genomic_DNA"/>
</dbReference>
<dbReference type="RefSeq" id="WP_012854466.1">
    <property type="nucleotide sequence ID" value="NC_013510.1"/>
</dbReference>
<dbReference type="PDB" id="5C4P">
    <property type="method" value="X-ray"/>
    <property type="resolution" value="1.97 A"/>
    <property type="chains" value="A=1-123"/>
</dbReference>
<dbReference type="PDB" id="5C68">
    <property type="method" value="X-ray"/>
    <property type="resolution" value="1.46 A"/>
    <property type="chains" value="A=1-123"/>
</dbReference>
<dbReference type="PDB" id="5C6X">
    <property type="method" value="X-ray"/>
    <property type="resolution" value="1.50 A"/>
    <property type="chains" value="A=1-123"/>
</dbReference>
<dbReference type="PDB" id="5CB9">
    <property type="method" value="X-ray"/>
    <property type="resolution" value="1.95 A"/>
    <property type="chains" value="A=1-123"/>
</dbReference>
<dbReference type="PDB" id="5D4F">
    <property type="method" value="X-ray"/>
    <property type="resolution" value="1.72 A"/>
    <property type="chains" value="A=1-123"/>
</dbReference>
<dbReference type="PDB" id="5DFG">
    <property type="method" value="X-ray"/>
    <property type="resolution" value="1.97 A"/>
    <property type="chains" value="A=1-123"/>
</dbReference>
<dbReference type="PDB" id="5DRH">
    <property type="method" value="X-ray"/>
    <property type="resolution" value="2.27 A"/>
    <property type="chains" value="A=1-123"/>
</dbReference>
<dbReference type="PDB" id="5HCW">
    <property type="method" value="X-ray"/>
    <property type="resolution" value="2.79 A"/>
    <property type="chains" value="A/B/C/D=1-123"/>
</dbReference>
<dbReference type="PDB" id="5V0F">
    <property type="method" value="X-ray"/>
    <property type="resolution" value="2.23 A"/>
    <property type="chains" value="A=1-123"/>
</dbReference>
<dbReference type="PDB" id="6XA0">
    <property type="method" value="X-ray"/>
    <property type="resolution" value="2.15 A"/>
    <property type="chains" value="A/B=1-123"/>
</dbReference>
<dbReference type="PDB" id="6XCK">
    <property type="method" value="X-ray"/>
    <property type="resolution" value="1.62 A"/>
    <property type="chains" value="A/B=1-123"/>
</dbReference>
<dbReference type="PDBsum" id="5C4P"/>
<dbReference type="PDBsum" id="5C68"/>
<dbReference type="PDBsum" id="5C6X"/>
<dbReference type="PDBsum" id="5CB9"/>
<dbReference type="PDBsum" id="5D4F"/>
<dbReference type="PDBsum" id="5DFG"/>
<dbReference type="PDBsum" id="5DRH"/>
<dbReference type="PDBsum" id="5HCW"/>
<dbReference type="PDBsum" id="5V0F"/>
<dbReference type="PDBsum" id="6XA0"/>
<dbReference type="PDBsum" id="6XCK"/>
<dbReference type="SMR" id="D1A230"/>
<dbReference type="STRING" id="471852.Tcur_4156"/>
<dbReference type="KEGG" id="tcu:Tcur_4156"/>
<dbReference type="eggNOG" id="COG0346">
    <property type="taxonomic scope" value="Bacteria"/>
</dbReference>
<dbReference type="HOGENOM" id="CLU_125391_0_0_11"/>
<dbReference type="OrthoDB" id="9789608at2"/>
<dbReference type="Proteomes" id="UP000001918">
    <property type="component" value="Chromosome"/>
</dbReference>
<dbReference type="GO" id="GO:0051213">
    <property type="term" value="F:dioxygenase activity"/>
    <property type="evidence" value="ECO:0007669"/>
    <property type="project" value="UniProtKB-KW"/>
</dbReference>
<dbReference type="GO" id="GO:0046872">
    <property type="term" value="F:metal ion binding"/>
    <property type="evidence" value="ECO:0007669"/>
    <property type="project" value="UniProtKB-KW"/>
</dbReference>
<dbReference type="GO" id="GO:0046686">
    <property type="term" value="P:response to cadmium ion"/>
    <property type="evidence" value="ECO:0007669"/>
    <property type="project" value="TreeGrafter"/>
</dbReference>
<dbReference type="Gene3D" id="3.10.180.10">
    <property type="entry name" value="2,3-Dihydroxybiphenyl 1,2-Dioxygenase, domain 1"/>
    <property type="match status" value="1"/>
</dbReference>
<dbReference type="InterPro" id="IPR052393">
    <property type="entry name" value="Cadmium-induced_rsp"/>
</dbReference>
<dbReference type="InterPro" id="IPR029068">
    <property type="entry name" value="Glyas_Bleomycin-R_OHBP_Dase"/>
</dbReference>
<dbReference type="InterPro" id="IPR004360">
    <property type="entry name" value="Glyas_Fos-R_dOase_dom"/>
</dbReference>
<dbReference type="InterPro" id="IPR037523">
    <property type="entry name" value="VOC"/>
</dbReference>
<dbReference type="InterPro" id="IPR049789">
    <property type="entry name" value="YqcK/CadI-like"/>
</dbReference>
<dbReference type="NCBIfam" id="NF041414">
    <property type="entry name" value="ArsI_CadI_VOC"/>
    <property type="match status" value="1"/>
</dbReference>
<dbReference type="PANTHER" id="PTHR41294">
    <property type="entry name" value="CADMIUM-INDUCED PROTEIN CADI"/>
    <property type="match status" value="1"/>
</dbReference>
<dbReference type="PANTHER" id="PTHR41294:SF1">
    <property type="entry name" value="CADMIUM-INDUCED PROTEIN CADI"/>
    <property type="match status" value="1"/>
</dbReference>
<dbReference type="Pfam" id="PF00903">
    <property type="entry name" value="Glyoxalase"/>
    <property type="match status" value="1"/>
</dbReference>
<dbReference type="SUPFAM" id="SSF54593">
    <property type="entry name" value="Glyoxalase/Bleomycin resistance protein/Dihydroxybiphenyl dioxygenase"/>
    <property type="match status" value="1"/>
</dbReference>
<dbReference type="PROSITE" id="PS51819">
    <property type="entry name" value="VOC"/>
    <property type="match status" value="1"/>
</dbReference>
<accession>D1A230</accession>
<keyword id="KW-0002">3D-structure</keyword>
<keyword id="KW-0223">Dioxygenase</keyword>
<keyword id="KW-0408">Iron</keyword>
<keyword id="KW-0479">Metal-binding</keyword>
<keyword id="KW-0560">Oxidoreductase</keyword>
<keyword id="KW-1185">Reference proteome</keyword>
<sequence length="151" mass="15756">MSRVQLALRVPDLEASIGFYSKLFGTGPAKVRPGYANFAIAEPPLKLVLIEGAGEDATRLDHLGVEVEDSAQVGHAARRLKESGLATVEENDTACCYAVQDKVWVTGPGGEPWEVYVVKGDADTLAKADDSACCTPRDSGSAGAAVGADCC</sequence>
<comment type="function">
    <text evidence="1 4 5 10 11">Nonheme iron-dependent dioxygenase that can break carbon-arsenic bonds, playing a role in the detoxification of environmental organoarsenical compounds. Catalyzes the oxygen-dependent demethylation of highly toxic methylarsonous acid (MAs(III)) to arsenite, which can then be exported out of the cell (PubMed:27107642, PubMed:35487149). Can also cleave the C-As bond in several trivalent aromatic arsenicals, including roxarsone (III), nitarsone (III) and (4-aminophenyl)arsonous acid (By similarity). Organoarsenical degradation by this enzyme is proposed to have a significant impact on the arsenic biogeocycle that maintains a balance between organic and inorganic species (Probable).</text>
</comment>
<comment type="catalytic activity">
    <reaction evidence="4 5">
        <text>methylarsonous acid + AH2 + O2 = arsenite + methanol + A + H(+)</text>
        <dbReference type="Rhea" id="RHEA:82323"/>
        <dbReference type="ChEBI" id="CHEBI:13193"/>
        <dbReference type="ChEBI" id="CHEBI:15378"/>
        <dbReference type="ChEBI" id="CHEBI:15379"/>
        <dbReference type="ChEBI" id="CHEBI:17499"/>
        <dbReference type="ChEBI" id="CHEBI:17790"/>
        <dbReference type="ChEBI" id="CHEBI:17826"/>
        <dbReference type="ChEBI" id="CHEBI:29242"/>
    </reaction>
    <physiologicalReaction direction="left-to-right" evidence="10 11">
        <dbReference type="Rhea" id="RHEA:82324"/>
    </physiologicalReaction>
</comment>
<comment type="catalytic activity">
    <reaction evidence="1">
        <text>roxarsone (III) + AH2 + O2 = 4-hydroxy-3-nitrocyclohexa-2,5-dien-1-one + arsenite + A + H(+)</text>
        <dbReference type="Rhea" id="RHEA:82363"/>
        <dbReference type="ChEBI" id="CHEBI:13193"/>
        <dbReference type="ChEBI" id="CHEBI:15378"/>
        <dbReference type="ChEBI" id="CHEBI:15379"/>
        <dbReference type="ChEBI" id="CHEBI:17499"/>
        <dbReference type="ChEBI" id="CHEBI:29242"/>
        <dbReference type="ChEBI" id="CHEBI:231974"/>
        <dbReference type="ChEBI" id="CHEBI:231975"/>
    </reaction>
    <physiologicalReaction direction="left-to-right" evidence="1">
        <dbReference type="Rhea" id="RHEA:82364"/>
    </physiologicalReaction>
</comment>
<comment type="catalytic activity">
    <reaction evidence="1">
        <text>nitarsone (III) + AH2 + O2 = 4-nitrocyclohexa-2,5-dien-1-one + arsenite + A + H(+)</text>
        <dbReference type="Rhea" id="RHEA:82439"/>
        <dbReference type="ChEBI" id="CHEBI:13193"/>
        <dbReference type="ChEBI" id="CHEBI:15378"/>
        <dbReference type="ChEBI" id="CHEBI:15379"/>
        <dbReference type="ChEBI" id="CHEBI:17499"/>
        <dbReference type="ChEBI" id="CHEBI:29242"/>
        <dbReference type="ChEBI" id="CHEBI:232329"/>
        <dbReference type="ChEBI" id="CHEBI:232330"/>
    </reaction>
    <physiologicalReaction direction="left-to-right" evidence="1">
        <dbReference type="Rhea" id="RHEA:82440"/>
    </physiologicalReaction>
</comment>
<comment type="catalytic activity">
    <reaction evidence="1">
        <text>4-aminophenylarsonous acid + AH2 + O2 = 4-aminocyclohexa-2,5-dien-1-one + arsenite + A</text>
        <dbReference type="Rhea" id="RHEA:82443"/>
        <dbReference type="ChEBI" id="CHEBI:13193"/>
        <dbReference type="ChEBI" id="CHEBI:15379"/>
        <dbReference type="ChEBI" id="CHEBI:17499"/>
        <dbReference type="ChEBI" id="CHEBI:29242"/>
        <dbReference type="ChEBI" id="CHEBI:50022"/>
        <dbReference type="ChEBI" id="CHEBI:232331"/>
    </reaction>
    <physiologicalReaction direction="left-to-right" evidence="1">
        <dbReference type="Rhea" id="RHEA:82444"/>
    </physiologicalReaction>
</comment>
<comment type="cofactor">
    <cofactor evidence="5">
        <name>Fe(2+)</name>
        <dbReference type="ChEBI" id="CHEBI:29033"/>
    </cofactor>
</comment>
<comment type="biophysicochemical properties">
    <temperatureDependence>
        <text evidence="4">Exhibits robust catalytic activity from 37 to 55 degrees Celsius.</text>
    </temperatureDependence>
</comment>
<comment type="subunit">
    <text evidence="3">Monomer.</text>
</comment>
<comment type="domain">
    <text evidence="5 10">The thiolates of the vicinal cysteine pair (Cys95-Cys96) directly coordinate the arsenic atom of the organoarsenical substrate.</text>
</comment>
<comment type="miscellaneous">
    <text evidence="10 11">Organoarsenicals are used as herbicides, pesticides, antimicrobial growth promoters, and chemical warfare agents. Arsenic is the most widespread environmental toxin and is classified as a Group 1 human carcinogen.</text>
</comment>
<feature type="chain" id="PRO_0000462112" description="Trivalent organoarsenical cleaving enzyme">
    <location>
        <begin position="1"/>
        <end position="151"/>
    </location>
</feature>
<feature type="domain" description="VOC" evidence="2">
    <location>
        <begin position="2"/>
        <end position="118"/>
    </location>
</feature>
<feature type="binding site" evidence="4 17">
    <location>
        <position position="5"/>
    </location>
    <ligand>
        <name>Fe(2+)</name>
        <dbReference type="ChEBI" id="CHEBI:29033"/>
    </ligand>
</feature>
<feature type="binding site" evidence="5 21">
    <location>
        <position position="61"/>
    </location>
    <ligand>
        <name>roxarsone (III)</name>
        <dbReference type="ChEBI" id="CHEBI:231974"/>
    </ligand>
</feature>
<feature type="binding site" evidence="4 17">
    <location>
        <position position="62"/>
    </location>
    <ligand>
        <name>Fe(2+)</name>
        <dbReference type="ChEBI" id="CHEBI:29033"/>
    </ligand>
</feature>
<feature type="binding site" evidence="5 10 21">
    <location>
        <position position="95"/>
    </location>
    <ligand>
        <name>roxarsone (III)</name>
        <dbReference type="ChEBI" id="CHEBI:231974"/>
    </ligand>
</feature>
<feature type="binding site" evidence="5 10 21">
    <location>
        <position position="96"/>
    </location>
    <ligand>
        <name>roxarsone (III)</name>
        <dbReference type="ChEBI" id="CHEBI:231974"/>
    </ligand>
</feature>
<feature type="binding site" evidence="4 17">
    <location>
        <position position="114"/>
    </location>
    <ligand>
        <name>Fe(2+)</name>
        <dbReference type="ChEBI" id="CHEBI:29033"/>
    </ligand>
</feature>
<feature type="mutagenesis site" description="Retains less than 5% of wild-type catalytic activity." evidence="5">
    <original>Y</original>
    <variation>F</variation>
    <location>
        <position position="35"/>
    </location>
</feature>
<feature type="mutagenesis site" description="Retains less than 5% of wild-type catalytic activity." evidence="5">
    <original>Q</original>
    <variation>A</variation>
    <location>
        <position position="100"/>
    </location>
</feature>
<feature type="mutagenesis site" description="Retains catalytic activity similar to the wild-type." evidence="5">
    <original>Q</original>
    <variation>H</variation>
    <location>
        <position position="100"/>
    </location>
</feature>
<feature type="mutagenesis site" description="Nearly inactive. High decrease in iron affinity." evidence="5">
    <original>K</original>
    <variation>A</variation>
    <location>
        <position position="102"/>
    </location>
</feature>
<feature type="mutagenesis site" description="Nearly inactive. High decrease in iron affinity." evidence="5">
    <original>K</original>
    <variation>E</variation>
    <location>
        <position position="102"/>
    </location>
</feature>
<feature type="mutagenesis site" description="Nearly inactive. No change in iron affinity." evidence="5">
    <original>K</original>
    <variation>R</variation>
    <location>
        <position position="102"/>
    </location>
</feature>
<gene>
    <name evidence="6" type="primary">arsI</name>
    <name evidence="12" type="ordered locus">Tcur_4156</name>
</gene>
<reference key="1">
    <citation type="journal article" date="2011" name="Stand. Genomic Sci.">
        <title>Complete genome sequence of Thermomonospora curvata type strain (B9).</title>
        <authorList>
            <person name="Chertkov O."/>
            <person name="Sikorski J."/>
            <person name="Nolan M."/>
            <person name="Lapidus A."/>
            <person name="Lucas S."/>
            <person name="Del Rio T.G."/>
            <person name="Tice H."/>
            <person name="Cheng J.F."/>
            <person name="Goodwin L."/>
            <person name="Pitluck S."/>
            <person name="Liolios K."/>
            <person name="Ivanova N."/>
            <person name="Mavromatis K."/>
            <person name="Mikhailova N."/>
            <person name="Ovchinnikova G."/>
            <person name="Pati A."/>
            <person name="Chen A."/>
            <person name="Palaniappan K."/>
            <person name="Djao O.D."/>
            <person name="Land M."/>
            <person name="Hauser L."/>
            <person name="Chang Y.J."/>
            <person name="Jeffries C.D."/>
            <person name="Brettin T."/>
            <person name="Han C."/>
            <person name="Detter J.C."/>
            <person name="Rohde M."/>
            <person name="Goeker M."/>
            <person name="Woyke T."/>
            <person name="Bristow J."/>
            <person name="Eisen J.A."/>
            <person name="Markowitz V."/>
            <person name="Hugenholtz P."/>
            <person name="Klenk H.P."/>
            <person name="Kyrpides N.C."/>
        </authorList>
    </citation>
    <scope>NUCLEOTIDE SEQUENCE [LARGE SCALE GENOMIC DNA]</scope>
    <source>
        <strain>ATCC 19995 / DSM 43183 / JCM 3096 / KCTC 9072 / NBRC 15933 / NCIMB 10081 / Henssen B9</strain>
    </source>
</reference>
<reference key="2">
    <citation type="journal article" date="2014" name="Acta Crystallogr. F Struct. Biol. Commun.">
        <title>Crystallization and preliminary X-ray crystallographic studies of the ArsI C-As lyase from Thermomonospora curvata.</title>
        <authorList>
            <person name="Nadar S.V."/>
            <person name="Yoshinaga M."/>
            <person name="Kandavelu P."/>
            <person name="Sankaran B."/>
            <person name="Rosen B.P."/>
        </authorList>
    </citation>
    <scope>CRYSTALLIZATION</scope>
    <scope>SUBUNIT</scope>
    <source>
        <strain>ATCC 19995 / DSM 43183 / JCM 3096 / KCTC 9072 / NBRC 15933 / NCIMB 10081 / Henssen B9</strain>
    </source>
</reference>
<reference evidence="13 14 15 16 17 18 19 20" key="3">
    <citation type="journal article" date="2016" name="J. Mol. Biol.">
        <title>Structure of the ArsI C-As Lyase: Insights into the Mechanism of Degradation of Organoarsenical Herbicides and Growth Promoters.</title>
        <authorList>
            <person name="Nadar V.S."/>
            <person name="Yoshinaga M."/>
            <person name="Pawitwar S.S."/>
            <person name="Kandavelu P."/>
            <person name="Sankaran B."/>
            <person name="Rosen B.P."/>
        </authorList>
    </citation>
    <scope>X-RAY CRYSTALLOGRAPHY (1.46 ANGSTROMS) OF 1-123 OF WILD TYPE AND MUTANT HIS-97/PHE-99 IN COMPLEXES WITH FE(3+); NI(2+) AND CO(2+)</scope>
    <scope>FUNCTION</scope>
    <scope>CATALYTIC ACTIVITY</scope>
    <scope>BIOPHYSICOCHEMICAL PROPERTIES</scope>
    <source>
        <strain>ATCC 19995 / DSM 43183 / JCM 3096 / KCTC 9072 / NBRC 15933 / NCIMB 10081 / Henssen B9</strain>
    </source>
</reference>
<reference evidence="21 22 23" key="4">
    <citation type="journal article" date="2022" name="J. Inorg. Biochem.">
        <title>The ArsI C-As lyase: Elucidating the catalytic mechanism of degradation of organoarsenicals.</title>
        <authorList>
            <person name="Nadar V.S."/>
            <person name="Kandavelu P."/>
            <person name="Sankaran B."/>
            <person name="Rosen B.P."/>
            <person name="Yoshinaga M."/>
        </authorList>
    </citation>
    <scope>X-RAY CRYSTALLOGRAPHY (2.15 ANGSTROMS) OF 1-123 OF MUTANT ALA-102 IN COMPLEX WITH SUBSTRATE ROXARSONE (III) AND FE(2+); MUTANT ARG-102 IN COMPLEX WITH NI(2+) AND MUTANT GLU-102</scope>
    <scope>FUNCTION</scope>
    <scope>CATALYTIC ACTIVITY</scope>
    <scope>COFACTOR</scope>
    <scope>REACTION MECHANISM</scope>
    <scope>MUTAGENESIS OF TYR-35; GLN-100 AND LYS-102</scope>
    <source>
        <strain>ATCC 19995 / DSM 43183 / JCM 3096 / KCTC 9072 / NBRC 15933 / NCIMB 10081 / Henssen B9</strain>
    </source>
</reference>
<proteinExistence type="evidence at protein level"/>